<protein>
    <recommendedName>
        <fullName evidence="7">Eukaryotic translation initiation factor 4E-1</fullName>
        <shortName evidence="8">ZmeIF4E</shortName>
        <shortName evidence="7">eIF-4E-1</shortName>
        <shortName evidence="7">eIF4E-1</shortName>
    </recommendedName>
    <alternativeName>
        <fullName evidence="9">eIF-4F 25 kDa subunit</fullName>
    </alternativeName>
    <alternativeName>
        <fullName evidence="9">eIF-4F p26 subunit</fullName>
    </alternativeName>
    <alternativeName>
        <fullName evidence="7">mRNA cap-binding protein</fullName>
    </alternativeName>
</protein>
<reference key="1">
    <citation type="journal article" date="1999" name="Plant J.">
        <title>Oxygen deprivation stimulates Ca2+-mediated phosphorylation of mRNA cap-binding protein eIF4E in maize roots.</title>
        <authorList>
            <person name="Manjunath S."/>
            <person name="Williams A.J."/>
            <person name="Bailey-Serres J."/>
        </authorList>
    </citation>
    <scope>NUCLEOTIDE SEQUENCE [MRNA]</scope>
    <scope>PHOSPHORYLATION</scope>
    <source>
        <strain>cv. B73 Inbred</strain>
        <tissue>Root</tissue>
    </source>
</reference>
<reference key="2">
    <citation type="journal article" date="2013" name="Mol. Genet. Genomics">
        <title>Identification of promoter motifs regulating ZmeIF4E expression level involved in maize rough dwarf disease resistance in maize (Zea Mays L.).</title>
        <authorList>
            <person name="Shi L."/>
            <person name="Weng J."/>
            <person name="Liu C."/>
            <person name="Song X."/>
            <person name="Miao H."/>
            <person name="Hao Z."/>
            <person name="Xie C."/>
            <person name="Li M."/>
            <person name="Zhang D."/>
            <person name="Bai L."/>
            <person name="Pan G."/>
            <person name="Li X."/>
            <person name="Zhang S."/>
        </authorList>
    </citation>
    <scope>NUCLEOTIDE SEQUENCE [GENOMIC DNA]</scope>
    <scope>INDUCTION BY ETHYLENE; JASMONIC ACID AND SALICYLIC ACID</scope>
    <source>
        <strain>cv. X178</strain>
        <strain>cv. Ye478</strain>
    </source>
</reference>
<reference key="3">
    <citation type="journal article" date="2009" name="Science">
        <title>The B73 maize genome: complexity, diversity, and dynamics.</title>
        <authorList>
            <person name="Schnable P.S."/>
            <person name="Ware D."/>
            <person name="Fulton R.S."/>
            <person name="Stein J.C."/>
            <person name="Wei F."/>
            <person name="Pasternak S."/>
            <person name="Liang C."/>
            <person name="Zhang J."/>
            <person name="Fulton L."/>
            <person name="Graves T.A."/>
            <person name="Minx P."/>
            <person name="Reily A.D."/>
            <person name="Courtney L."/>
            <person name="Kruchowski S.S."/>
            <person name="Tomlinson C."/>
            <person name="Strong C."/>
            <person name="Delehaunty K."/>
            <person name="Fronick C."/>
            <person name="Courtney B."/>
            <person name="Rock S.M."/>
            <person name="Belter E."/>
            <person name="Du F."/>
            <person name="Kim K."/>
            <person name="Abbott R.M."/>
            <person name="Cotton M."/>
            <person name="Levy A."/>
            <person name="Marchetto P."/>
            <person name="Ochoa K."/>
            <person name="Jackson S.M."/>
            <person name="Gillam B."/>
            <person name="Chen W."/>
            <person name="Yan L."/>
            <person name="Higginbotham J."/>
            <person name="Cardenas M."/>
            <person name="Waligorski J."/>
            <person name="Applebaum E."/>
            <person name="Phelps L."/>
            <person name="Falcone J."/>
            <person name="Kanchi K."/>
            <person name="Thane T."/>
            <person name="Scimone A."/>
            <person name="Thane N."/>
            <person name="Henke J."/>
            <person name="Wang T."/>
            <person name="Ruppert J."/>
            <person name="Shah N."/>
            <person name="Rotter K."/>
            <person name="Hodges J."/>
            <person name="Ingenthron E."/>
            <person name="Cordes M."/>
            <person name="Kohlberg S."/>
            <person name="Sgro J."/>
            <person name="Delgado B."/>
            <person name="Mead K."/>
            <person name="Chinwalla A."/>
            <person name="Leonard S."/>
            <person name="Crouse K."/>
            <person name="Collura K."/>
            <person name="Kudrna D."/>
            <person name="Currie J."/>
            <person name="He R."/>
            <person name="Angelova A."/>
            <person name="Rajasekar S."/>
            <person name="Mueller T."/>
            <person name="Lomeli R."/>
            <person name="Scara G."/>
            <person name="Ko A."/>
            <person name="Delaney K."/>
            <person name="Wissotski M."/>
            <person name="Lopez G."/>
            <person name="Campos D."/>
            <person name="Braidotti M."/>
            <person name="Ashley E."/>
            <person name="Golser W."/>
            <person name="Kim H."/>
            <person name="Lee S."/>
            <person name="Lin J."/>
            <person name="Dujmic Z."/>
            <person name="Kim W."/>
            <person name="Talag J."/>
            <person name="Zuccolo A."/>
            <person name="Fan C."/>
            <person name="Sebastian A."/>
            <person name="Kramer M."/>
            <person name="Spiegel L."/>
            <person name="Nascimento L."/>
            <person name="Zutavern T."/>
            <person name="Miller B."/>
            <person name="Ambroise C."/>
            <person name="Muller S."/>
            <person name="Spooner W."/>
            <person name="Narechania A."/>
            <person name="Ren L."/>
            <person name="Wei S."/>
            <person name="Kumari S."/>
            <person name="Faga B."/>
            <person name="Levy M.J."/>
            <person name="McMahan L."/>
            <person name="Van Buren P."/>
            <person name="Vaughn M.W."/>
            <person name="Ying K."/>
            <person name="Yeh C.-T."/>
            <person name="Emrich S.J."/>
            <person name="Jia Y."/>
            <person name="Kalyanaraman A."/>
            <person name="Hsia A.-P."/>
            <person name="Barbazuk W.B."/>
            <person name="Baucom R.S."/>
            <person name="Brutnell T.P."/>
            <person name="Carpita N.C."/>
            <person name="Chaparro C."/>
            <person name="Chia J.-M."/>
            <person name="Deragon J.-M."/>
            <person name="Estill J.C."/>
            <person name="Fu Y."/>
            <person name="Jeddeloh J.A."/>
            <person name="Han Y."/>
            <person name="Lee H."/>
            <person name="Li P."/>
            <person name="Lisch D.R."/>
            <person name="Liu S."/>
            <person name="Liu Z."/>
            <person name="Nagel D.H."/>
            <person name="McCann M.C."/>
            <person name="SanMiguel P."/>
            <person name="Myers A.M."/>
            <person name="Nettleton D."/>
            <person name="Nguyen J."/>
            <person name="Penning B.W."/>
            <person name="Ponnala L."/>
            <person name="Schneider K.L."/>
            <person name="Schwartz D.C."/>
            <person name="Sharma A."/>
            <person name="Soderlund C."/>
            <person name="Springer N.M."/>
            <person name="Sun Q."/>
            <person name="Wang H."/>
            <person name="Waterman M."/>
            <person name="Westerman R."/>
            <person name="Wolfgruber T.K."/>
            <person name="Yang L."/>
            <person name="Yu Y."/>
            <person name="Zhang L."/>
            <person name="Zhou S."/>
            <person name="Zhu Q."/>
            <person name="Bennetzen J.L."/>
            <person name="Dawe R.K."/>
            <person name="Jiang J."/>
            <person name="Jiang N."/>
            <person name="Presting G.G."/>
            <person name="Wessler S.R."/>
            <person name="Aluru S."/>
            <person name="Martienssen R.A."/>
            <person name="Clifton S.W."/>
            <person name="McCombie W.R."/>
            <person name="Wing R.A."/>
            <person name="Wilson R.K."/>
        </authorList>
    </citation>
    <scope>NUCLEOTIDE SEQUENCE [LARGE SCALE GENOMIC DNA]</scope>
    <source>
        <strain>cv. B73</strain>
        <tissue>Seedling</tissue>
    </source>
</reference>
<reference key="4">
    <citation type="journal article" date="2018" name="Nat. Genet.">
        <title>Extensive intraspecific gene order and gene structural variations between Mo17 and other maize genomes.</title>
        <authorList>
            <person name="Sun S."/>
            <person name="Zhou Y."/>
            <person name="Chen J."/>
            <person name="Shi J."/>
            <person name="Zhao H."/>
            <person name="Zhao H."/>
            <person name="Song W."/>
            <person name="Zhang M."/>
            <person name="Cui Y."/>
            <person name="Dong X."/>
            <person name="Liu H."/>
            <person name="Ma X."/>
            <person name="Jiao Y."/>
            <person name="Wang B."/>
            <person name="Wei X."/>
            <person name="Stein J.C."/>
            <person name="Glaubitz J.C."/>
            <person name="Lu F."/>
            <person name="Yu G."/>
            <person name="Liang C."/>
            <person name="Fengler K."/>
            <person name="Li B."/>
            <person name="Rafalski A."/>
            <person name="Schnable P.S."/>
            <person name="Ware D.H."/>
            <person name="Buckler E.S."/>
            <person name="Lai J."/>
        </authorList>
    </citation>
    <scope>NUCLEOTIDE SEQUENCE [LARGE SCALE GENOMIC DNA]</scope>
    <source>
        <strain>cv. Missouri 17</strain>
        <tissue>Seedling</tissue>
    </source>
</reference>
<reference key="5">
    <citation type="journal article" date="2009" name="Plant Mol. Biol.">
        <title>Insights into corn genes derived from large-scale cDNA sequencing.</title>
        <authorList>
            <person name="Alexandrov N.N."/>
            <person name="Brover V.V."/>
            <person name="Freidin S."/>
            <person name="Troukhan M.E."/>
            <person name="Tatarinova T.V."/>
            <person name="Zhang H."/>
            <person name="Swaller T.J."/>
            <person name="Lu Y.-P."/>
            <person name="Bouck J."/>
            <person name="Flavell R.B."/>
            <person name="Feldmann K.A."/>
        </authorList>
    </citation>
    <scope>NUCLEOTIDE SEQUENCE [LARGE SCALE MRNA]</scope>
</reference>
<reference key="6">
    <citation type="journal article" date="2009" name="PLoS Genet.">
        <title>Sequencing, mapping, and analysis of 27,455 maize full-length cDNAs.</title>
        <authorList>
            <person name="Soderlund C."/>
            <person name="Descour A."/>
            <person name="Kudrna D."/>
            <person name="Bomhoff M."/>
            <person name="Boyd L."/>
            <person name="Currie J."/>
            <person name="Angelova A."/>
            <person name="Collura K."/>
            <person name="Wissotski M."/>
            <person name="Ashley E."/>
            <person name="Morrow D."/>
            <person name="Fernandes J."/>
            <person name="Walbot V."/>
            <person name="Yu Y."/>
        </authorList>
    </citation>
    <scope>NUCLEOTIDE SEQUENCE [LARGE SCALE MRNA]</scope>
    <source>
        <strain>cv. B73</strain>
    </source>
</reference>
<reference key="7">
    <citation type="journal article" date="2014" name="Infect. Genet. Evol.">
        <title>Evolution of plant eukaryotic initiation factor 4E (eIF4E) and potyvirus genome-linked protein (VPg): a game of mirrors impacting resistance spectrum and durability.</title>
        <authorList>
            <person name="Moury B."/>
            <person name="Charron C."/>
            <person name="Janzac B."/>
            <person name="Simon V."/>
            <person name="Gallois J.L."/>
            <person name="Palloix A."/>
            <person name="Caranta C."/>
        </authorList>
    </citation>
    <scope>GENE FAMILY</scope>
    <scope>REVIEW</scope>
</reference>
<keyword id="KW-0963">Cytoplasm</keyword>
<keyword id="KW-1015">Disulfide bond</keyword>
<keyword id="KW-0396">Initiation factor</keyword>
<keyword id="KW-0539">Nucleus</keyword>
<keyword id="KW-0597">Phosphoprotein</keyword>
<keyword id="KW-0648">Protein biosynthesis</keyword>
<keyword id="KW-1185">Reference proteome</keyword>
<keyword id="KW-0694">RNA-binding</keyword>
<keyword id="KW-0810">Translation regulation</keyword>
<organism>
    <name type="scientific">Zea mays</name>
    <name type="common">Maize</name>
    <dbReference type="NCBI Taxonomy" id="4577"/>
    <lineage>
        <taxon>Eukaryota</taxon>
        <taxon>Viridiplantae</taxon>
        <taxon>Streptophyta</taxon>
        <taxon>Embryophyta</taxon>
        <taxon>Tracheophyta</taxon>
        <taxon>Spermatophyta</taxon>
        <taxon>Magnoliopsida</taxon>
        <taxon>Liliopsida</taxon>
        <taxon>Poales</taxon>
        <taxon>Poaceae</taxon>
        <taxon>PACMAD clade</taxon>
        <taxon>Panicoideae</taxon>
        <taxon>Andropogonodae</taxon>
        <taxon>Andropogoneae</taxon>
        <taxon>Tripsacinae</taxon>
        <taxon>Zea</taxon>
    </lineage>
</organism>
<proteinExistence type="evidence at protein level"/>
<comment type="function">
    <text evidence="2">Component of the protein complex eIF4F, which is involved in the recognition of the mRNA cap, ATP-dependent unwinding of 5'-terminal secondary structure and recruitment of mRNA to the ribosome (By similarity). Recognizes and binds the 7-methylguanosine-containing mRNA cap during an early step in the initiation of protein synthesis and facilitates ribosome binding by inducing the unwinding of the mRNAs secondary structures (By similarity).</text>
</comment>
<comment type="subunit">
    <text evidence="2">EIF4F is a multi-subunit complex, the composition of which varies with external and internal environmental conditions (By similarity). It is composed of at least EIF4A, EIF4E and EIF4G (By similarity). EIF4E is also known to interact with other partners (By similarity). In higher plants two isoforms of EIF4F have been identified, named isoform EIF4F and isoform EIF(iso)4F (By similarity). Isoform EIF4F has subunits p220 and p26, whereas isoform EIF(iso)4F has subunits p82 and p28 (By similarity).</text>
</comment>
<comment type="subcellular location">
    <subcellularLocation>
        <location evidence="1">Nucleus</location>
    </subcellularLocation>
    <subcellularLocation>
        <location evidence="1">Cytoplasm</location>
    </subcellularLocation>
</comment>
<comment type="induction">
    <text evidence="6">Induced by ethylene (ETH), jasmonic acid (JA) and salicylic acid (SA), mainly in lines (e.g. cv. Ye478) susceptible to potyvirus such as maize rough dwarf virus (MRDV).</text>
</comment>
<comment type="PTM">
    <text evidence="2">According to the redox status, the Cys-116-Cys-154 disulfide bridge may have a role in regulating protein function by affecting its ability to bind capped mRNA.</text>
</comment>
<comment type="PTM">
    <text evidence="5">Phosphorylated upon oxygen deprivation.</text>
</comment>
<comment type="similarity">
    <text evidence="9">Belongs to the eukaryotic initiation factor 4E family.</text>
</comment>
<gene>
    <name evidence="7" type="primary">eIF4E1</name>
    <name evidence="9" type="synonym">eif6</name>
    <name evidence="9" type="synonym">PCO081734</name>
    <name evidence="10" type="ORF">ZEAMMB73_Zm00001d041682</name>
    <name evidence="11" type="ORF">Zm00014a_030232</name>
</gene>
<evidence type="ECO:0000250" key="1">
    <source>
        <dbReference type="UniProtKB" id="C6ZJZ3"/>
    </source>
</evidence>
<evidence type="ECO:0000250" key="2">
    <source>
        <dbReference type="UniProtKB" id="P29557"/>
    </source>
</evidence>
<evidence type="ECO:0000250" key="3">
    <source>
        <dbReference type="UniProtKB" id="Q00LS8"/>
    </source>
</evidence>
<evidence type="ECO:0000256" key="4">
    <source>
        <dbReference type="SAM" id="MobiDB-lite"/>
    </source>
</evidence>
<evidence type="ECO:0000269" key="5">
    <source>
    </source>
</evidence>
<evidence type="ECO:0000269" key="6">
    <source>
    </source>
</evidence>
<evidence type="ECO:0000303" key="7">
    <source>
    </source>
</evidence>
<evidence type="ECO:0000303" key="8">
    <source>
    </source>
</evidence>
<evidence type="ECO:0000305" key="9"/>
<evidence type="ECO:0000312" key="10">
    <source>
        <dbReference type="EMBL" id="ONM33473.1"/>
    </source>
</evidence>
<evidence type="ECO:0000312" key="11">
    <source>
        <dbReference type="EMBL" id="PWZ32524.1"/>
    </source>
</evidence>
<accession>O81481</accession>
<accession>A0A3L6FH01</accession>
<accession>B4G0T4</accession>
<accession>B6TBD1</accession>
<accession>D5KXY1</accession>
<name>IF4E1_MAIZE</name>
<feature type="chain" id="PRO_0000193658" description="Eukaryotic translation initiation factor 4E-1">
    <location>
        <begin position="1"/>
        <end position="218"/>
    </location>
</feature>
<feature type="region of interest" description="Disordered" evidence="4">
    <location>
        <begin position="1"/>
        <end position="39"/>
    </location>
</feature>
<feature type="region of interest" description="EIF4G-binding" evidence="3">
    <location>
        <begin position="43"/>
        <end position="46"/>
    </location>
</feature>
<feature type="region of interest" description="EIF4G-binding" evidence="3">
    <location>
        <begin position="53"/>
        <end position="89"/>
    </location>
</feature>
<feature type="region of interest" description="EIF4G-binding" evidence="3">
    <location>
        <begin position="137"/>
        <end position="146"/>
    </location>
</feature>
<feature type="compositionally biased region" description="Acidic residues" evidence="4">
    <location>
        <begin position="21"/>
        <end position="30"/>
    </location>
</feature>
<feature type="binding site" evidence="2">
    <location>
        <begin position="61"/>
        <end position="66"/>
    </location>
    <ligand>
        <name>mRNA</name>
        <dbReference type="ChEBI" id="CHEBI:33699"/>
    </ligand>
    <ligandPart>
        <name>N(7)-methylguanosine 5'-triphosphate group</name>
        <dbReference type="ChEBI" id="CHEBI:74429"/>
        <note>m7GTP residue in mRNA cap</note>
    </ligandPart>
</feature>
<feature type="binding site" evidence="2">
    <location>
        <position position="93"/>
    </location>
    <ligand>
        <name>mRNA</name>
        <dbReference type="ChEBI" id="CHEBI:33699"/>
    </ligand>
    <ligandPart>
        <name>N(7)-methylguanosine 5'-triphosphate group</name>
        <dbReference type="ChEBI" id="CHEBI:74429"/>
        <note>m7GTP residue in mRNA cap</note>
    </ligandPart>
</feature>
<feature type="binding site" evidence="2">
    <location>
        <begin position="111"/>
        <end position="112"/>
    </location>
    <ligand>
        <name>mRNA</name>
        <dbReference type="ChEBI" id="CHEBI:33699"/>
    </ligand>
    <ligandPart>
        <name>N(7)-methylguanosine 5'-triphosphate group</name>
        <dbReference type="ChEBI" id="CHEBI:74429"/>
        <note>m7GTP residue in mRNA cap</note>
    </ligandPart>
</feature>
<feature type="binding site" evidence="2">
    <location>
        <begin position="161"/>
        <end position="166"/>
    </location>
    <ligand>
        <name>mRNA</name>
        <dbReference type="ChEBI" id="CHEBI:33699"/>
    </ligand>
    <ligandPart>
        <name>N(7)-methylguanosine 5'-triphosphate group</name>
        <dbReference type="ChEBI" id="CHEBI:74429"/>
        <note>m7GTP residue in mRNA cap</note>
    </ligandPart>
</feature>
<feature type="binding site" evidence="3">
    <location>
        <begin position="206"/>
        <end position="210"/>
    </location>
    <ligand>
        <name>mRNA</name>
        <dbReference type="ChEBI" id="CHEBI:33699"/>
    </ligand>
    <ligandPart>
        <name>N(7)-methylguanosine 5'-triphosphate group</name>
        <dbReference type="ChEBI" id="CHEBI:74429"/>
        <note>m7GTP residue in mRNA cap</note>
    </ligandPart>
</feature>
<feature type="disulfide bond" evidence="2">
    <location>
        <begin position="116"/>
        <end position="154"/>
    </location>
</feature>
<feature type="sequence conflict" description="In Ref. 5; ACG34414." evidence="9" ref="5">
    <original>G</original>
    <variation>S</variation>
    <location>
        <position position="13"/>
    </location>
</feature>
<feature type="sequence conflict" description="In Ref. 5; ACG34414." evidence="9" ref="5">
    <original>L</original>
    <variation>I</variation>
    <location>
        <position position="33"/>
    </location>
</feature>
<feature type="sequence conflict" description="In Ref. 2; ADE22251." evidence="9" ref="2">
    <original>W</original>
    <variation>L</variation>
    <location>
        <position position="82"/>
    </location>
</feature>
<feature type="sequence conflict" description="In Ref. 1; AAC27714." evidence="9" ref="1">
    <original>N</original>
    <variation>E</variation>
    <location>
        <position position="214"/>
    </location>
</feature>
<sequence length="218" mass="24455">MAEETDTRPASAGSRGRPAPEDDDREEGEITDLACAPSPPATHPLEHSWTFWFDNPQSKSKQAAWGSSIRPIHTFSTVEEFWGLYNNINHPSKLIVGADFHCFKNKIEPKWEDPICANGGKWTISCGRGKSDTFWLHTLLAMIGEQFDYGDEICGAVVSVRGKQERIAIWTKNAANEAAQVSIGKQWKELLDYKDSIGFIVHDDAKKMDKGLKNRYTV</sequence>
<dbReference type="EMBL" id="AF076954">
    <property type="protein sequence ID" value="AAC27714.1"/>
    <property type="molecule type" value="mRNA"/>
</dbReference>
<dbReference type="EMBL" id="GU723473">
    <property type="protein sequence ID" value="ADE22251.1"/>
    <property type="molecule type" value="Genomic_DNA"/>
</dbReference>
<dbReference type="EMBL" id="CM007649">
    <property type="protein sequence ID" value="ONM33473.1"/>
    <property type="molecule type" value="Genomic_DNA"/>
</dbReference>
<dbReference type="EMBL" id="NCVQ01000004">
    <property type="protein sequence ID" value="PWZ32524.1"/>
    <property type="molecule type" value="Genomic_DNA"/>
</dbReference>
<dbReference type="EMBL" id="EU962296">
    <property type="protein sequence ID" value="ACG34414.1"/>
    <property type="molecule type" value="mRNA"/>
</dbReference>
<dbReference type="EMBL" id="BT042972">
    <property type="protein sequence ID" value="ACF87977.1"/>
    <property type="molecule type" value="mRNA"/>
</dbReference>
<dbReference type="EMBL" id="BT043330">
    <property type="protein sequence ID" value="ACF88335.1"/>
    <property type="molecule type" value="mRNA"/>
</dbReference>
<dbReference type="PIR" id="T01686">
    <property type="entry name" value="T01686"/>
</dbReference>
<dbReference type="RefSeq" id="NP_001105612.1">
    <property type="nucleotide sequence ID" value="NM_001112142.1"/>
</dbReference>
<dbReference type="RefSeq" id="NP_001167656.1">
    <property type="nucleotide sequence ID" value="NM_001174185.1"/>
</dbReference>
<dbReference type="SMR" id="O81481"/>
<dbReference type="FunCoup" id="O81481">
    <property type="interactions" value="3581"/>
</dbReference>
<dbReference type="IntAct" id="O81481">
    <property type="interactions" value="11"/>
</dbReference>
<dbReference type="STRING" id="4577.O81481"/>
<dbReference type="PaxDb" id="4577-GRMZM2G002616_P01"/>
<dbReference type="EnsemblPlants" id="Zm00001eb137550_T001">
    <property type="protein sequence ID" value="Zm00001eb137550_P001"/>
    <property type="gene ID" value="Zm00001eb137550"/>
</dbReference>
<dbReference type="GeneID" id="542608"/>
<dbReference type="Gramene" id="Zm00001eb137550_T001">
    <property type="protein sequence ID" value="Zm00001eb137550_P001"/>
    <property type="gene ID" value="Zm00001eb137550"/>
</dbReference>
<dbReference type="KEGG" id="zma:542608"/>
<dbReference type="MaizeGDB" id="320756"/>
<dbReference type="eggNOG" id="KOG1670">
    <property type="taxonomic scope" value="Eukaryota"/>
</dbReference>
<dbReference type="HOGENOM" id="CLU_043552_2_1_1"/>
<dbReference type="InParanoid" id="O81481"/>
<dbReference type="OMA" id="MWEDDVN"/>
<dbReference type="OrthoDB" id="590761at2759"/>
<dbReference type="Proteomes" id="UP000007305">
    <property type="component" value="Chromosome 3"/>
</dbReference>
<dbReference type="Proteomes" id="UP000251960">
    <property type="component" value="Chromosome 3"/>
</dbReference>
<dbReference type="ExpressionAtlas" id="O81481">
    <property type="expression patterns" value="baseline and differential"/>
</dbReference>
<dbReference type="GO" id="GO:0005737">
    <property type="term" value="C:cytoplasm"/>
    <property type="evidence" value="ECO:0000250"/>
    <property type="project" value="UniProtKB"/>
</dbReference>
<dbReference type="GO" id="GO:0016281">
    <property type="term" value="C:eukaryotic translation initiation factor 4F complex"/>
    <property type="evidence" value="ECO:0000318"/>
    <property type="project" value="GO_Central"/>
</dbReference>
<dbReference type="GO" id="GO:0005634">
    <property type="term" value="C:nucleus"/>
    <property type="evidence" value="ECO:0000250"/>
    <property type="project" value="UniProtKB"/>
</dbReference>
<dbReference type="GO" id="GO:0000340">
    <property type="term" value="F:RNA 7-methylguanosine cap binding"/>
    <property type="evidence" value="ECO:0000318"/>
    <property type="project" value="GO_Central"/>
</dbReference>
<dbReference type="GO" id="GO:0003723">
    <property type="term" value="F:RNA binding"/>
    <property type="evidence" value="ECO:0000250"/>
    <property type="project" value="UniProtKB"/>
</dbReference>
<dbReference type="GO" id="GO:0003743">
    <property type="term" value="F:translation initiation factor activity"/>
    <property type="evidence" value="ECO:0000250"/>
    <property type="project" value="UniProtKB"/>
</dbReference>
<dbReference type="GO" id="GO:0051607">
    <property type="term" value="P:defense response to virus"/>
    <property type="evidence" value="ECO:0000250"/>
    <property type="project" value="UniProtKB"/>
</dbReference>
<dbReference type="GO" id="GO:0006417">
    <property type="term" value="P:regulation of translation"/>
    <property type="evidence" value="ECO:0007669"/>
    <property type="project" value="UniProtKB-KW"/>
</dbReference>
<dbReference type="GO" id="GO:0034059">
    <property type="term" value="P:response to anoxia"/>
    <property type="evidence" value="ECO:0000314"/>
    <property type="project" value="AgBase"/>
</dbReference>
<dbReference type="GO" id="GO:0009723">
    <property type="term" value="P:response to ethylene"/>
    <property type="evidence" value="ECO:0000270"/>
    <property type="project" value="UniProtKB"/>
</dbReference>
<dbReference type="GO" id="GO:0009753">
    <property type="term" value="P:response to jasmonic acid"/>
    <property type="evidence" value="ECO:0000270"/>
    <property type="project" value="UniProtKB"/>
</dbReference>
<dbReference type="GO" id="GO:0009751">
    <property type="term" value="P:response to salicylic acid"/>
    <property type="evidence" value="ECO:0000270"/>
    <property type="project" value="UniProtKB"/>
</dbReference>
<dbReference type="GO" id="GO:0006413">
    <property type="term" value="P:translational initiation"/>
    <property type="evidence" value="ECO:0000250"/>
    <property type="project" value="UniProtKB"/>
</dbReference>
<dbReference type="FunFam" id="3.30.760.10:FF:000003">
    <property type="entry name" value="Eukaryotic translation initiation factor 4E"/>
    <property type="match status" value="1"/>
</dbReference>
<dbReference type="Gene3D" id="3.30.760.10">
    <property type="entry name" value="RNA Cap, Translation Initiation Factor Eif4e"/>
    <property type="match status" value="1"/>
</dbReference>
<dbReference type="InterPro" id="IPR023398">
    <property type="entry name" value="TIF_eIF4e-like"/>
</dbReference>
<dbReference type="InterPro" id="IPR001040">
    <property type="entry name" value="TIF_eIF_4E"/>
</dbReference>
<dbReference type="InterPro" id="IPR019770">
    <property type="entry name" value="TIF_eIF_4E_CS"/>
</dbReference>
<dbReference type="PANTHER" id="PTHR11960">
    <property type="entry name" value="EUKARYOTIC TRANSLATION INITIATION FACTOR 4E RELATED"/>
    <property type="match status" value="1"/>
</dbReference>
<dbReference type="PANTHER" id="PTHR11960:SF8">
    <property type="entry name" value="EUKARYOTIC TRANSLATION INITIATION FACTOR 4E1-RELATED"/>
    <property type="match status" value="1"/>
</dbReference>
<dbReference type="Pfam" id="PF01652">
    <property type="entry name" value="IF4E"/>
    <property type="match status" value="1"/>
</dbReference>
<dbReference type="SUPFAM" id="SSF55418">
    <property type="entry name" value="eIF4e-like"/>
    <property type="match status" value="1"/>
</dbReference>
<dbReference type="PROSITE" id="PS00813">
    <property type="entry name" value="IF4E"/>
    <property type="match status" value="1"/>
</dbReference>